<proteinExistence type="inferred from homology"/>
<name>RL17_ANASK</name>
<evidence type="ECO:0000255" key="1">
    <source>
        <dbReference type="HAMAP-Rule" id="MF_01368"/>
    </source>
</evidence>
<evidence type="ECO:0000256" key="2">
    <source>
        <dbReference type="SAM" id="MobiDB-lite"/>
    </source>
</evidence>
<evidence type="ECO:0000305" key="3"/>
<organism>
    <name type="scientific">Anaeromyxobacter sp. (strain K)</name>
    <dbReference type="NCBI Taxonomy" id="447217"/>
    <lineage>
        <taxon>Bacteria</taxon>
        <taxon>Pseudomonadati</taxon>
        <taxon>Myxococcota</taxon>
        <taxon>Myxococcia</taxon>
        <taxon>Myxococcales</taxon>
        <taxon>Cystobacterineae</taxon>
        <taxon>Anaeromyxobacteraceae</taxon>
        <taxon>Anaeromyxobacter</taxon>
    </lineage>
</organism>
<feature type="chain" id="PRO_1000144371" description="Large ribosomal subunit protein bL17">
    <location>
        <begin position="1"/>
        <end position="158"/>
    </location>
</feature>
<feature type="region of interest" description="Disordered" evidence="2">
    <location>
        <begin position="119"/>
        <end position="158"/>
    </location>
</feature>
<feature type="compositionally biased region" description="Basic and acidic residues" evidence="2">
    <location>
        <begin position="126"/>
        <end position="158"/>
    </location>
</feature>
<keyword id="KW-0687">Ribonucleoprotein</keyword>
<keyword id="KW-0689">Ribosomal protein</keyword>
<dbReference type="EMBL" id="CP001131">
    <property type="protein sequence ID" value="ACG73189.1"/>
    <property type="molecule type" value="Genomic_DNA"/>
</dbReference>
<dbReference type="RefSeq" id="WP_012525991.1">
    <property type="nucleotide sequence ID" value="NC_011145.1"/>
</dbReference>
<dbReference type="SMR" id="B4UBC7"/>
<dbReference type="KEGG" id="ank:AnaeK_1961"/>
<dbReference type="HOGENOM" id="CLU_074407_2_0_7"/>
<dbReference type="OrthoDB" id="9809073at2"/>
<dbReference type="Proteomes" id="UP000001871">
    <property type="component" value="Chromosome"/>
</dbReference>
<dbReference type="GO" id="GO:0022625">
    <property type="term" value="C:cytosolic large ribosomal subunit"/>
    <property type="evidence" value="ECO:0007669"/>
    <property type="project" value="TreeGrafter"/>
</dbReference>
<dbReference type="GO" id="GO:0003735">
    <property type="term" value="F:structural constituent of ribosome"/>
    <property type="evidence" value="ECO:0007669"/>
    <property type="project" value="InterPro"/>
</dbReference>
<dbReference type="GO" id="GO:0006412">
    <property type="term" value="P:translation"/>
    <property type="evidence" value="ECO:0007669"/>
    <property type="project" value="UniProtKB-UniRule"/>
</dbReference>
<dbReference type="FunFam" id="3.90.1030.10:FF:000001">
    <property type="entry name" value="50S ribosomal protein L17"/>
    <property type="match status" value="1"/>
</dbReference>
<dbReference type="Gene3D" id="3.90.1030.10">
    <property type="entry name" value="Ribosomal protein L17"/>
    <property type="match status" value="1"/>
</dbReference>
<dbReference type="HAMAP" id="MF_01368">
    <property type="entry name" value="Ribosomal_bL17"/>
    <property type="match status" value="1"/>
</dbReference>
<dbReference type="InterPro" id="IPR000456">
    <property type="entry name" value="Ribosomal_bL17"/>
</dbReference>
<dbReference type="InterPro" id="IPR047859">
    <property type="entry name" value="Ribosomal_bL17_CS"/>
</dbReference>
<dbReference type="InterPro" id="IPR036373">
    <property type="entry name" value="Ribosomal_bL17_sf"/>
</dbReference>
<dbReference type="NCBIfam" id="TIGR00059">
    <property type="entry name" value="L17"/>
    <property type="match status" value="1"/>
</dbReference>
<dbReference type="PANTHER" id="PTHR14413:SF16">
    <property type="entry name" value="LARGE RIBOSOMAL SUBUNIT PROTEIN BL17M"/>
    <property type="match status" value="1"/>
</dbReference>
<dbReference type="PANTHER" id="PTHR14413">
    <property type="entry name" value="RIBOSOMAL PROTEIN L17"/>
    <property type="match status" value="1"/>
</dbReference>
<dbReference type="Pfam" id="PF01196">
    <property type="entry name" value="Ribosomal_L17"/>
    <property type="match status" value="1"/>
</dbReference>
<dbReference type="SUPFAM" id="SSF64263">
    <property type="entry name" value="Prokaryotic ribosomal protein L17"/>
    <property type="match status" value="1"/>
</dbReference>
<dbReference type="PROSITE" id="PS01167">
    <property type="entry name" value="RIBOSOMAL_L17"/>
    <property type="match status" value="1"/>
</dbReference>
<accession>B4UBC7</accession>
<gene>
    <name evidence="1" type="primary">rplQ</name>
    <name type="ordered locus">AnaeK_1961</name>
</gene>
<comment type="subunit">
    <text evidence="1">Part of the 50S ribosomal subunit. Contacts protein L32.</text>
</comment>
<comment type="similarity">
    <text evidence="1">Belongs to the bacterial ribosomal protein bL17 family.</text>
</comment>
<reference key="1">
    <citation type="submission" date="2008-08" db="EMBL/GenBank/DDBJ databases">
        <title>Complete sequence of Anaeromyxobacter sp. K.</title>
        <authorList>
            <consortium name="US DOE Joint Genome Institute"/>
            <person name="Lucas S."/>
            <person name="Copeland A."/>
            <person name="Lapidus A."/>
            <person name="Glavina del Rio T."/>
            <person name="Dalin E."/>
            <person name="Tice H."/>
            <person name="Bruce D."/>
            <person name="Goodwin L."/>
            <person name="Pitluck S."/>
            <person name="Saunders E."/>
            <person name="Brettin T."/>
            <person name="Detter J.C."/>
            <person name="Han C."/>
            <person name="Larimer F."/>
            <person name="Land M."/>
            <person name="Hauser L."/>
            <person name="Kyrpides N."/>
            <person name="Ovchinnikiva G."/>
            <person name="Beliaev A."/>
        </authorList>
    </citation>
    <scope>NUCLEOTIDE SEQUENCE [LARGE SCALE GENOMIC DNA]</scope>
    <source>
        <strain>K</strain>
    </source>
</reference>
<protein>
    <recommendedName>
        <fullName evidence="1">Large ribosomal subunit protein bL17</fullName>
    </recommendedName>
    <alternativeName>
        <fullName evidence="3">50S ribosomal protein L17</fullName>
    </alternativeName>
</protein>
<sequence>MKHRVVGRRLDRTTEHRTAMFKNMVTSLLRHERIVTTTPKAKELKRFADKVITQAKRGTPHARRLAHRDVRDVEVLNKLFDTLAERFKARPGGYTRIVRVGRRAGDNAEMSVIELVDRAPAAAPEAEEKGEKKAAKAPKAEKAPKAEKKPAKKAAKAE</sequence>